<comment type="function">
    <text evidence="5">catalyzes the conversion of N-acetylglutamate-gamma-semialdehyde (NAGSA) to N-acetylornithine in arginine biosynthesis.</text>
</comment>
<comment type="catalytic activity">
    <reaction evidence="5">
        <text>N(2)-acetyl-L-ornithine + 2-oxoglutarate = N-acetyl-L-glutamate 5-semialdehyde + L-glutamate</text>
        <dbReference type="Rhea" id="RHEA:18049"/>
        <dbReference type="ChEBI" id="CHEBI:16810"/>
        <dbReference type="ChEBI" id="CHEBI:29123"/>
        <dbReference type="ChEBI" id="CHEBI:29985"/>
        <dbReference type="ChEBI" id="CHEBI:57805"/>
        <dbReference type="EC" id="2.6.1.11"/>
    </reaction>
    <physiologicalReaction direction="right-to-left" evidence="7">
        <dbReference type="Rhea" id="RHEA:18051"/>
    </physiologicalReaction>
</comment>
<comment type="cofactor">
    <cofactor>
        <name>pyridoxal 5'-phosphate</name>
        <dbReference type="ChEBI" id="CHEBI:597326"/>
    </cofactor>
</comment>
<comment type="biophysicochemical properties">
    <kinetics>
        <KM evidence="5">1.3 mM for acetylornithine</KM>
    </kinetics>
</comment>
<comment type="pathway">
    <text evidence="7">Amino-acid biosynthesis; L-arginine biosynthesis; N(2)-acetyl-L-ornithine from L-glutamate: step 4/4.</text>
</comment>
<comment type="subcellular location">
    <subcellularLocation>
        <location evidence="4">Mitochondrion matrix</location>
    </subcellularLocation>
</comment>
<comment type="miscellaneous">
    <text evidence="7">The reaction catalyzed by ACOAT is highly reversible. Moreover this enzyme may transaminate ornithine, although this activity should be of little importance at physiological pH.</text>
</comment>
<comment type="miscellaneous">
    <text evidence="3">Present with 2300 molecules/cell in log phase SD medium.</text>
</comment>
<comment type="similarity">
    <text evidence="6">Belongs to the class-III pyridoxal-phosphate-dependent aminotransferase family.</text>
</comment>
<evidence type="ECO:0000250" key="1"/>
<evidence type="ECO:0000255" key="2"/>
<evidence type="ECO:0000269" key="3">
    <source>
    </source>
</evidence>
<evidence type="ECO:0000269" key="4">
    <source>
    </source>
</evidence>
<evidence type="ECO:0000269" key="5">
    <source>
    </source>
</evidence>
<evidence type="ECO:0000305" key="6"/>
<evidence type="ECO:0000305" key="7">
    <source>
    </source>
</evidence>
<proteinExistence type="evidence at protein level"/>
<feature type="transit peptide" description="Mitochondrion" evidence="2">
    <location>
        <begin position="1"/>
        <end position="13"/>
    </location>
</feature>
<feature type="chain" id="PRO_0000002083" description="Acetylornithine aminotransferase, mitochondrial">
    <location>
        <begin position="14"/>
        <end position="423"/>
    </location>
</feature>
<feature type="modified residue" description="N6-(pyridoxal phosphate)lysine" evidence="1">
    <location>
        <position position="276"/>
    </location>
</feature>
<dbReference type="EC" id="2.6.1.11" evidence="5"/>
<dbReference type="EMBL" id="M32795">
    <property type="protein sequence ID" value="AAA34436.1"/>
    <property type="molecule type" value="Genomic_DNA"/>
</dbReference>
<dbReference type="EMBL" id="X84036">
    <property type="protein sequence ID" value="CAA58853.1"/>
    <property type="molecule type" value="Genomic_DNA"/>
</dbReference>
<dbReference type="EMBL" id="Z74882">
    <property type="protein sequence ID" value="CAA99161.1"/>
    <property type="molecule type" value="Genomic_DNA"/>
</dbReference>
<dbReference type="EMBL" id="BK006948">
    <property type="protein sequence ID" value="DAA10645.1"/>
    <property type="molecule type" value="Genomic_DNA"/>
</dbReference>
<dbReference type="PIR" id="S61868">
    <property type="entry name" value="S61868"/>
</dbReference>
<dbReference type="RefSeq" id="NP_014501.1">
    <property type="nucleotide sequence ID" value="NM_001183394.1"/>
</dbReference>
<dbReference type="SMR" id="P18544"/>
<dbReference type="BioGRID" id="34277">
    <property type="interactions" value="18"/>
</dbReference>
<dbReference type="DIP" id="DIP-2623N"/>
<dbReference type="FunCoup" id="P18544">
    <property type="interactions" value="377"/>
</dbReference>
<dbReference type="IntAct" id="P18544">
    <property type="interactions" value="3"/>
</dbReference>
<dbReference type="MINT" id="P18544"/>
<dbReference type="STRING" id="4932.YOL140W"/>
<dbReference type="iPTMnet" id="P18544"/>
<dbReference type="PaxDb" id="4932-YOL140W"/>
<dbReference type="PeptideAtlas" id="P18544"/>
<dbReference type="EnsemblFungi" id="YOL140W_mRNA">
    <property type="protein sequence ID" value="YOL140W"/>
    <property type="gene ID" value="YOL140W"/>
</dbReference>
<dbReference type="GeneID" id="854025"/>
<dbReference type="KEGG" id="sce:YOL140W"/>
<dbReference type="AGR" id="SGD:S000005500"/>
<dbReference type="SGD" id="S000005500">
    <property type="gene designation" value="ARG8"/>
</dbReference>
<dbReference type="VEuPathDB" id="FungiDB:YOL140W"/>
<dbReference type="eggNOG" id="KOG1401">
    <property type="taxonomic scope" value="Eukaryota"/>
</dbReference>
<dbReference type="GeneTree" id="ENSGT00970000196319"/>
<dbReference type="HOGENOM" id="CLU_016922_10_1_1"/>
<dbReference type="InParanoid" id="P18544"/>
<dbReference type="OMA" id="MVPGFKY"/>
<dbReference type="OrthoDB" id="5419315at2759"/>
<dbReference type="BioCyc" id="MetaCyc:YOL140W-MONOMER"/>
<dbReference type="BioCyc" id="YEAST:YOL140W-MONOMER"/>
<dbReference type="SABIO-RK" id="P18544"/>
<dbReference type="UniPathway" id="UPA00068">
    <property type="reaction ID" value="UER00109"/>
</dbReference>
<dbReference type="BioGRID-ORCS" id="854025">
    <property type="hits" value="0 hits in 10 CRISPR screens"/>
</dbReference>
<dbReference type="PRO" id="PR:P18544"/>
<dbReference type="Proteomes" id="UP000002311">
    <property type="component" value="Chromosome XV"/>
</dbReference>
<dbReference type="RNAct" id="P18544">
    <property type="molecule type" value="protein"/>
</dbReference>
<dbReference type="GO" id="GO:0005759">
    <property type="term" value="C:mitochondrial matrix"/>
    <property type="evidence" value="ECO:0000314"/>
    <property type="project" value="SGD"/>
</dbReference>
<dbReference type="GO" id="GO:0005739">
    <property type="term" value="C:mitochondrion"/>
    <property type="evidence" value="ECO:0007005"/>
    <property type="project" value="SGD"/>
</dbReference>
<dbReference type="GO" id="GO:0042802">
    <property type="term" value="F:identical protein binding"/>
    <property type="evidence" value="ECO:0000318"/>
    <property type="project" value="GO_Central"/>
</dbReference>
<dbReference type="GO" id="GO:0003992">
    <property type="term" value="F:N2-acetyl-L-ornithine:2-oxoglutarate 5-aminotransferase activity"/>
    <property type="evidence" value="ECO:0000314"/>
    <property type="project" value="SGD"/>
</dbReference>
<dbReference type="GO" id="GO:0030170">
    <property type="term" value="F:pyridoxal phosphate binding"/>
    <property type="evidence" value="ECO:0000318"/>
    <property type="project" value="GO_Central"/>
</dbReference>
<dbReference type="GO" id="GO:0006526">
    <property type="term" value="P:L-arginine biosynthetic process"/>
    <property type="evidence" value="ECO:0000304"/>
    <property type="project" value="SGD"/>
</dbReference>
<dbReference type="GO" id="GO:0006592">
    <property type="term" value="P:ornithine biosynthetic process"/>
    <property type="evidence" value="ECO:0000304"/>
    <property type="project" value="SGD"/>
</dbReference>
<dbReference type="CDD" id="cd00610">
    <property type="entry name" value="OAT_like"/>
    <property type="match status" value="1"/>
</dbReference>
<dbReference type="FunFam" id="3.40.640.10:FF:000004">
    <property type="entry name" value="Acetylornithine aminotransferase"/>
    <property type="match status" value="1"/>
</dbReference>
<dbReference type="Gene3D" id="3.90.1150.10">
    <property type="entry name" value="Aspartate Aminotransferase, domain 1"/>
    <property type="match status" value="1"/>
</dbReference>
<dbReference type="Gene3D" id="3.40.640.10">
    <property type="entry name" value="Type I PLP-dependent aspartate aminotransferase-like (Major domain)"/>
    <property type="match status" value="1"/>
</dbReference>
<dbReference type="HAMAP" id="MF_01107">
    <property type="entry name" value="ArgD_aminotrans_3"/>
    <property type="match status" value="1"/>
</dbReference>
<dbReference type="InterPro" id="IPR004636">
    <property type="entry name" value="AcOrn/SuccOrn_fam"/>
</dbReference>
<dbReference type="InterPro" id="IPR005814">
    <property type="entry name" value="Aminotrans_3"/>
</dbReference>
<dbReference type="InterPro" id="IPR049704">
    <property type="entry name" value="Aminotrans_3_PPA_site"/>
</dbReference>
<dbReference type="InterPro" id="IPR050103">
    <property type="entry name" value="Class-III_PLP-dep_AT"/>
</dbReference>
<dbReference type="InterPro" id="IPR015424">
    <property type="entry name" value="PyrdxlP-dep_Trfase"/>
</dbReference>
<dbReference type="InterPro" id="IPR015421">
    <property type="entry name" value="PyrdxlP-dep_Trfase_major"/>
</dbReference>
<dbReference type="InterPro" id="IPR015422">
    <property type="entry name" value="PyrdxlP-dep_Trfase_small"/>
</dbReference>
<dbReference type="NCBIfam" id="TIGR00707">
    <property type="entry name" value="argD"/>
    <property type="match status" value="1"/>
</dbReference>
<dbReference type="NCBIfam" id="NF002325">
    <property type="entry name" value="PRK01278.1"/>
    <property type="match status" value="1"/>
</dbReference>
<dbReference type="PANTHER" id="PTHR11986:SF79">
    <property type="entry name" value="ACETYLORNITHINE AMINOTRANSFERASE, MITOCHONDRIAL"/>
    <property type="match status" value="1"/>
</dbReference>
<dbReference type="PANTHER" id="PTHR11986">
    <property type="entry name" value="AMINOTRANSFERASE CLASS III"/>
    <property type="match status" value="1"/>
</dbReference>
<dbReference type="Pfam" id="PF00202">
    <property type="entry name" value="Aminotran_3"/>
    <property type="match status" value="1"/>
</dbReference>
<dbReference type="PIRSF" id="PIRSF000521">
    <property type="entry name" value="Transaminase_4ab_Lys_Orn"/>
    <property type="match status" value="1"/>
</dbReference>
<dbReference type="SUPFAM" id="SSF53383">
    <property type="entry name" value="PLP-dependent transferases"/>
    <property type="match status" value="1"/>
</dbReference>
<dbReference type="PROSITE" id="PS00600">
    <property type="entry name" value="AA_TRANSFER_CLASS_3"/>
    <property type="match status" value="1"/>
</dbReference>
<reference key="1">
    <citation type="journal article" date="1990" name="Gene">
        <title>Escherichia coli and Saccharomyces cerevisiae acetylornithine aminotransferase: evolutionary relationship with ornithine aminotransferase.</title>
        <authorList>
            <person name="Heimberg H."/>
            <person name="Boyen A."/>
            <person name="Crabeel M."/>
            <person name="Glansdorff N."/>
        </authorList>
    </citation>
    <scope>NUCLEOTIDE SEQUENCE [GENOMIC DNA]</scope>
    <scope>FUNCTION</scope>
    <scope>CATALYTIC ACTIVITY</scope>
    <scope>BIOPHYSICOCHEMICAL PROPERTIES</scope>
</reference>
<reference key="2">
    <citation type="journal article" date="1995" name="Yeast">
        <title>Sequence analysis of a 9873 bp fragment of the left arm of yeast chromosome XV that contains the ARG8 and CDC33 genes, a putative riboflavin synthase beta chain gene, and four new open reading frames.</title>
        <authorList>
            <person name="Casas C."/>
            <person name="Aldea M."/>
            <person name="Casamayor A."/>
            <person name="Lafuente M.J."/>
            <person name="Gamo F.J."/>
            <person name="Gancedo C."/>
            <person name="Arino J."/>
            <person name="Herrero E."/>
        </authorList>
    </citation>
    <scope>NUCLEOTIDE SEQUENCE [GENOMIC DNA]</scope>
    <source>
        <strain>ATCC 96604 / S288c / FY1679</strain>
    </source>
</reference>
<reference key="3">
    <citation type="journal article" date="1997" name="Nature">
        <title>The nucleotide sequence of Saccharomyces cerevisiae chromosome XV.</title>
        <authorList>
            <person name="Dujon B."/>
            <person name="Albermann K."/>
            <person name="Aldea M."/>
            <person name="Alexandraki D."/>
            <person name="Ansorge W."/>
            <person name="Arino J."/>
            <person name="Benes V."/>
            <person name="Bohn C."/>
            <person name="Bolotin-Fukuhara M."/>
            <person name="Bordonne R."/>
            <person name="Boyer J."/>
            <person name="Camasses A."/>
            <person name="Casamayor A."/>
            <person name="Casas C."/>
            <person name="Cheret G."/>
            <person name="Cziepluch C."/>
            <person name="Daignan-Fornier B."/>
            <person name="Dang V.-D."/>
            <person name="de Haan M."/>
            <person name="Delius H."/>
            <person name="Durand P."/>
            <person name="Fairhead C."/>
            <person name="Feldmann H."/>
            <person name="Gaillon L."/>
            <person name="Galisson F."/>
            <person name="Gamo F.-J."/>
            <person name="Gancedo C."/>
            <person name="Goffeau A."/>
            <person name="Goulding S.E."/>
            <person name="Grivell L.A."/>
            <person name="Habbig B."/>
            <person name="Hand N.J."/>
            <person name="Hani J."/>
            <person name="Hattenhorst U."/>
            <person name="Hebling U."/>
            <person name="Hernando Y."/>
            <person name="Herrero E."/>
            <person name="Heumann K."/>
            <person name="Hiesel R."/>
            <person name="Hilger F."/>
            <person name="Hofmann B."/>
            <person name="Hollenberg C.P."/>
            <person name="Hughes B."/>
            <person name="Jauniaux J.-C."/>
            <person name="Kalogeropoulos A."/>
            <person name="Katsoulou C."/>
            <person name="Kordes E."/>
            <person name="Lafuente M.J."/>
            <person name="Landt O."/>
            <person name="Louis E.J."/>
            <person name="Maarse A.C."/>
            <person name="Madania A."/>
            <person name="Mannhaupt G."/>
            <person name="Marck C."/>
            <person name="Martin R.P."/>
            <person name="Mewes H.-W."/>
            <person name="Michaux G."/>
            <person name="Paces V."/>
            <person name="Parle-McDermott A.G."/>
            <person name="Pearson B.M."/>
            <person name="Perrin A."/>
            <person name="Pettersson B."/>
            <person name="Poch O."/>
            <person name="Pohl T.M."/>
            <person name="Poirey R."/>
            <person name="Portetelle D."/>
            <person name="Pujol A."/>
            <person name="Purnelle B."/>
            <person name="Ramezani Rad M."/>
            <person name="Rechmann S."/>
            <person name="Schwager C."/>
            <person name="Schweizer M."/>
            <person name="Sor F."/>
            <person name="Sterky F."/>
            <person name="Tarassov I.A."/>
            <person name="Teodoru C."/>
            <person name="Tettelin H."/>
            <person name="Thierry A."/>
            <person name="Tobiasch E."/>
            <person name="Tzermia M."/>
            <person name="Uhlen M."/>
            <person name="Unseld M."/>
            <person name="Valens M."/>
            <person name="Vandenbol M."/>
            <person name="Vetter I."/>
            <person name="Vlcek C."/>
            <person name="Voet M."/>
            <person name="Volckaert G."/>
            <person name="Voss H."/>
            <person name="Wambutt R."/>
            <person name="Wedler H."/>
            <person name="Wiemann S."/>
            <person name="Winsor B."/>
            <person name="Wolfe K.H."/>
            <person name="Zollner A."/>
            <person name="Zumstein E."/>
            <person name="Kleine K."/>
        </authorList>
    </citation>
    <scope>NUCLEOTIDE SEQUENCE [LARGE SCALE GENOMIC DNA]</scope>
    <source>
        <strain>ATCC 204508 / S288c</strain>
    </source>
</reference>
<reference key="4">
    <citation type="journal article" date="2014" name="G3 (Bethesda)">
        <title>The reference genome sequence of Saccharomyces cerevisiae: Then and now.</title>
        <authorList>
            <person name="Engel S.R."/>
            <person name="Dietrich F.S."/>
            <person name="Fisk D.G."/>
            <person name="Binkley G."/>
            <person name="Balakrishnan R."/>
            <person name="Costanzo M.C."/>
            <person name="Dwight S.S."/>
            <person name="Hitz B.C."/>
            <person name="Karra K."/>
            <person name="Nash R.S."/>
            <person name="Weng S."/>
            <person name="Wong E.D."/>
            <person name="Lloyd P."/>
            <person name="Skrzypek M.S."/>
            <person name="Miyasato S.R."/>
            <person name="Simison M."/>
            <person name="Cherry J.M."/>
        </authorList>
    </citation>
    <scope>GENOME REANNOTATION</scope>
    <source>
        <strain>ATCC 204508 / S288c</strain>
    </source>
</reference>
<reference key="5">
    <citation type="journal article" date="1978" name="J. Bacteriol.">
        <title>Arginine metabolism in Saccharomyces cerevisiae: subcellular localization of the enzymes.</title>
        <authorList>
            <person name="Jauniaux J.-C."/>
            <person name="Urrestarazu L.A."/>
            <person name="Wiame J.-M."/>
        </authorList>
    </citation>
    <scope>SUBCELLULAR LOCATION</scope>
</reference>
<reference key="6">
    <citation type="journal article" date="2003" name="Nature">
        <title>Global analysis of protein expression in yeast.</title>
        <authorList>
            <person name="Ghaemmaghami S."/>
            <person name="Huh W.-K."/>
            <person name="Bower K."/>
            <person name="Howson R.W."/>
            <person name="Belle A."/>
            <person name="Dephoure N."/>
            <person name="O'Shea E.K."/>
            <person name="Weissman J.S."/>
        </authorList>
    </citation>
    <scope>LEVEL OF PROTEIN EXPRESSION [LARGE SCALE ANALYSIS]</scope>
</reference>
<keyword id="KW-0028">Amino-acid biosynthesis</keyword>
<keyword id="KW-0032">Aminotransferase</keyword>
<keyword id="KW-0055">Arginine biosynthesis</keyword>
<keyword id="KW-0496">Mitochondrion</keyword>
<keyword id="KW-0663">Pyridoxal phosphate</keyword>
<keyword id="KW-1185">Reference proteome</keyword>
<keyword id="KW-0808">Transferase</keyword>
<keyword id="KW-0809">Transit peptide</keyword>
<organism>
    <name type="scientific">Saccharomyces cerevisiae (strain ATCC 204508 / S288c)</name>
    <name type="common">Baker's yeast</name>
    <dbReference type="NCBI Taxonomy" id="559292"/>
    <lineage>
        <taxon>Eukaryota</taxon>
        <taxon>Fungi</taxon>
        <taxon>Dikarya</taxon>
        <taxon>Ascomycota</taxon>
        <taxon>Saccharomycotina</taxon>
        <taxon>Saccharomycetes</taxon>
        <taxon>Saccharomycetales</taxon>
        <taxon>Saccharomycetaceae</taxon>
        <taxon>Saccharomyces</taxon>
    </lineage>
</organism>
<accession>P18544</accession>
<accession>D6W1S9</accession>
<protein>
    <recommendedName>
        <fullName>Acetylornithine aminotransferase, mitochondrial</fullName>
        <shortName>ACOAT</shortName>
        <ecNumber evidence="5">2.6.1.11</ecNumber>
    </recommendedName>
</protein>
<sequence length="423" mass="46681">MFKRYLSSTSSRRFTSILEEKAFQVTTYSRPEDLCITRGKNAKLYDDVNGKEYIDFTAGIAVTALGHANPKVAEILHHQANKLVHSSNLYFTKECLDLSEKIVEKTKQFGGQHDASRVFLCNSGTEANEAALKFAKKHGIMKNPSKQGIVAFENSFHGRTMGALSVTWNSKYRTPFGDLVPHVSFLNLNDEMTKLQSYIETKKDEIAGLIVEPIQGEGGVFPVEVEKLTGLKKICQDNDVIVIHDEIQCGLGRSGKLWAHAYLPSEAHPDIFTSAKALGNGFPIAATIVNEKVNNALRVGDHGTTYGGNPLACSVSNYVLDTIADEAFLKQVSKKSDILQKRLREIQAKYPNQIKTIRGKGLMLGAEFVEPPTEVIKKARELGLLIITAGKSTVRFVPALTIEDELIEEGMDAFEKAIEAVYA</sequence>
<gene>
    <name type="primary">ARG8</name>
    <name type="ordered locus">YOL140W</name>
</gene>
<name>ARGD_YEAST</name>